<dbReference type="EMBL" id="AL646052">
    <property type="protein sequence ID" value="CAD16677.1"/>
    <property type="molecule type" value="Genomic_DNA"/>
</dbReference>
<dbReference type="RefSeq" id="WP_011002873.1">
    <property type="nucleotide sequence ID" value="NC_003295.1"/>
</dbReference>
<dbReference type="SMR" id="Q8XV63"/>
<dbReference type="STRING" id="267608.RSc2968"/>
<dbReference type="EnsemblBacteria" id="CAD16677">
    <property type="protein sequence ID" value="CAD16677"/>
    <property type="gene ID" value="RSc2968"/>
</dbReference>
<dbReference type="KEGG" id="rso:RSc2968"/>
<dbReference type="eggNOG" id="COG0232">
    <property type="taxonomic scope" value="Bacteria"/>
</dbReference>
<dbReference type="HOGENOM" id="CLU_028163_1_0_4"/>
<dbReference type="Proteomes" id="UP000001436">
    <property type="component" value="Chromosome"/>
</dbReference>
<dbReference type="GO" id="GO:0008832">
    <property type="term" value="F:dGTPase activity"/>
    <property type="evidence" value="ECO:0007669"/>
    <property type="project" value="TreeGrafter"/>
</dbReference>
<dbReference type="GO" id="GO:0006203">
    <property type="term" value="P:dGTP catabolic process"/>
    <property type="evidence" value="ECO:0007669"/>
    <property type="project" value="TreeGrafter"/>
</dbReference>
<dbReference type="CDD" id="cd00077">
    <property type="entry name" value="HDc"/>
    <property type="match status" value="1"/>
</dbReference>
<dbReference type="FunFam" id="1.10.3210.10:FF:000024">
    <property type="entry name" value="Deoxyguanosinetriphosphate triphosphohydrolase-like protein"/>
    <property type="match status" value="1"/>
</dbReference>
<dbReference type="Gene3D" id="1.10.3210.10">
    <property type="entry name" value="Hypothetical protein af1432"/>
    <property type="match status" value="1"/>
</dbReference>
<dbReference type="HAMAP" id="MF_01212">
    <property type="entry name" value="dGTPase_type2"/>
    <property type="match status" value="1"/>
</dbReference>
<dbReference type="InterPro" id="IPR006261">
    <property type="entry name" value="dGTPase"/>
</dbReference>
<dbReference type="InterPro" id="IPR050135">
    <property type="entry name" value="dGTPase-like"/>
</dbReference>
<dbReference type="InterPro" id="IPR023023">
    <property type="entry name" value="dNTPase_2"/>
</dbReference>
<dbReference type="InterPro" id="IPR003607">
    <property type="entry name" value="HD/PDEase_dom"/>
</dbReference>
<dbReference type="InterPro" id="IPR006674">
    <property type="entry name" value="HD_domain"/>
</dbReference>
<dbReference type="InterPro" id="IPR026875">
    <property type="entry name" value="PHydrolase_assoc_dom"/>
</dbReference>
<dbReference type="NCBIfam" id="TIGR01353">
    <property type="entry name" value="dGTP_triPase"/>
    <property type="match status" value="1"/>
</dbReference>
<dbReference type="NCBIfam" id="NF002326">
    <property type="entry name" value="PRK01286.1-1"/>
    <property type="match status" value="1"/>
</dbReference>
<dbReference type="PANTHER" id="PTHR11373:SF43">
    <property type="entry name" value="DEOXYGUANOSINETRIPHOSPHATE TRIPHOSPHOHYDROLASE-LIKE PROTEIN"/>
    <property type="match status" value="1"/>
</dbReference>
<dbReference type="PANTHER" id="PTHR11373">
    <property type="entry name" value="DEOXYNUCLEOSIDE TRIPHOSPHATE TRIPHOSPHOHYDROLASE"/>
    <property type="match status" value="1"/>
</dbReference>
<dbReference type="Pfam" id="PF01966">
    <property type="entry name" value="HD"/>
    <property type="match status" value="1"/>
</dbReference>
<dbReference type="Pfam" id="PF13286">
    <property type="entry name" value="HD_assoc"/>
    <property type="match status" value="1"/>
</dbReference>
<dbReference type="SMART" id="SM00471">
    <property type="entry name" value="HDc"/>
    <property type="match status" value="1"/>
</dbReference>
<dbReference type="SUPFAM" id="SSF109604">
    <property type="entry name" value="HD-domain/PDEase-like"/>
    <property type="match status" value="1"/>
</dbReference>
<dbReference type="PROSITE" id="PS51831">
    <property type="entry name" value="HD"/>
    <property type="match status" value="1"/>
</dbReference>
<accession>Q8XV63</accession>
<organism>
    <name type="scientific">Ralstonia nicotianae (strain ATCC BAA-1114 / GMI1000)</name>
    <name type="common">Ralstonia solanacearum</name>
    <dbReference type="NCBI Taxonomy" id="267608"/>
    <lineage>
        <taxon>Bacteria</taxon>
        <taxon>Pseudomonadati</taxon>
        <taxon>Pseudomonadota</taxon>
        <taxon>Betaproteobacteria</taxon>
        <taxon>Burkholderiales</taxon>
        <taxon>Burkholderiaceae</taxon>
        <taxon>Ralstonia</taxon>
        <taxon>Ralstonia solanacearum species complex</taxon>
    </lineage>
</organism>
<proteinExistence type="inferred from homology"/>
<reference key="1">
    <citation type="journal article" date="2002" name="Nature">
        <title>Genome sequence of the plant pathogen Ralstonia solanacearum.</title>
        <authorList>
            <person name="Salanoubat M."/>
            <person name="Genin S."/>
            <person name="Artiguenave F."/>
            <person name="Gouzy J."/>
            <person name="Mangenot S."/>
            <person name="Arlat M."/>
            <person name="Billault A."/>
            <person name="Brottier P."/>
            <person name="Camus J.-C."/>
            <person name="Cattolico L."/>
            <person name="Chandler M."/>
            <person name="Choisne N."/>
            <person name="Claudel-Renard C."/>
            <person name="Cunnac S."/>
            <person name="Demange N."/>
            <person name="Gaspin C."/>
            <person name="Lavie M."/>
            <person name="Moisan A."/>
            <person name="Robert C."/>
            <person name="Saurin W."/>
            <person name="Schiex T."/>
            <person name="Siguier P."/>
            <person name="Thebault P."/>
            <person name="Whalen M."/>
            <person name="Wincker P."/>
            <person name="Levy M."/>
            <person name="Weissenbach J."/>
            <person name="Boucher C.A."/>
        </authorList>
    </citation>
    <scope>NUCLEOTIDE SEQUENCE [LARGE SCALE GENOMIC DNA]</scope>
    <source>
        <strain>ATCC BAA-1114 / GMI1000</strain>
    </source>
</reference>
<feature type="chain" id="PRO_0000205313" description="Deoxyguanosinetriphosphate triphosphohydrolase-like protein">
    <location>
        <begin position="1"/>
        <end position="387"/>
    </location>
</feature>
<feature type="domain" description="HD" evidence="2">
    <location>
        <begin position="78"/>
        <end position="209"/>
    </location>
</feature>
<keyword id="KW-0378">Hydrolase</keyword>
<keyword id="KW-1185">Reference proteome</keyword>
<comment type="similarity">
    <text evidence="1">Belongs to the dGTPase family. Type 2 subfamily.</text>
</comment>
<gene>
    <name type="ordered locus">RSc2968</name>
    <name type="ORF">RS01329</name>
</gene>
<name>DGTL1_RALN1</name>
<protein>
    <recommendedName>
        <fullName evidence="1">Deoxyguanosinetriphosphate triphosphohydrolase-like protein</fullName>
    </recommendedName>
</protein>
<evidence type="ECO:0000255" key="1">
    <source>
        <dbReference type="HAMAP-Rule" id="MF_01212"/>
    </source>
</evidence>
<evidence type="ECO:0000255" key="2">
    <source>
        <dbReference type="PROSITE-ProRule" id="PRU01175"/>
    </source>
</evidence>
<sequence length="387" mass="43929">MNDRLDLLPAPFDLEGHLAPYAAHAAQSRGRVHAEPPSTSRTEFQRDRDRIIHCTAFRRLEYKTQVFVNHEGDLFRTRLTHSLEVAQIARSIARSLRLNEDLVEAISLAHDLGHTPFGHAGQDALNDCMKPYGGFEHNLQSLLVVDRLEERYGGFDGLNLTFETREGILKHCSRNNAATLGDLGRRFLEGQQPSLEAQLANLADEVAYNNHDIDDGLRSGLITLEQLEGVPLWARHRREAEAAFPGVGGRRMINETIRRIINALIVDLIAGTRAAITGAAPQSIDDVRAAPPLVAFSEPMRDEARVLKRFLFDNLYRHYLVMRMAAKARRIIEDLFRVFLEDPRLLPPQYQARDPADQPRWIAHYIAGMTDRYAIKEHRRIFAVEVL</sequence>